<accession>A0QIY2</accession>
<sequence length="914" mass="95466">MAGKARVHELAKELGVTSKEVLARLNEQGEFVKSASSTVEAPVARRLRESFGGGKAAEGAAKAPAKAAAKGDAKTAAKGDVKAPDKALDAALDNAIKAGGNGEAAAPPAQPGGTATTPAAQATPEAPARPGPAAARPSAPAPGQPKPPAPGQPPRPGATPGPRPGPAPKPAARTPRVGNNPFSSAQPVDRPIPRPVPRPGAPRPGAPRPGASPGNMPPRPGGVGGPGRPARPGAPRPGGGRPGGPGGRDGGGGNYRGGGVGAPPGGGGGFRGRPGGGGGGRPGQRGGAAGAFGRPGGAPRRGRKSKRQKRQEYDSMQAPVVGGVRLPHGNGETIRLARGASLSDFAEKIDANPASLVQALFNLGEMVTATQSVGDETLELLGSEMNYNVQVVSPEDEDRELLESFDLTYGEDEGTEEDLQTRPPVVTVMGHVDHGKTRLLDTIRKANVREAEQVTVEHDGVERPITFIDTPGHEAFTAMRARGAKATDIAILVVAADDGVMPQTVEAINHAQAADVPIVVAVNKIDVEGADPQKIRGQLTEYGLVPEEFGGDTMFVDISAKQGTNIDQLLEAVLLTADAALDLRANPDMEAQGVAIEAHLDRGRGPVATVLIQRGTLRVGDSIVAGDAYGRVRRMVDEHGDDVEEALPSRPVQVIGFTSVPGAGDNLLVVDEDRIARQIADKRSARKRNALAARSRKRISLEDLDSALKETSQLNLILKGDNAGTVEALEEALMGIQIDDEVALRVIDRGVGGITETNVNLASASDAVIIGFNVRAEGKATELANREGVEIRYYSVIYQAIDEIEKALRGMLKPIYEENQLGRAEIRAIFRSSKVGIIAGCMITSGVVRRNAKARLLRDNVVVSENLTINSLRREKDDVTEVREGFECGMTLGYSDIKEGDVIESYELVQKERT</sequence>
<reference key="1">
    <citation type="submission" date="2006-10" db="EMBL/GenBank/DDBJ databases">
        <authorList>
            <person name="Fleischmann R.D."/>
            <person name="Dodson R.J."/>
            <person name="Haft D.H."/>
            <person name="Merkel J.S."/>
            <person name="Nelson W.C."/>
            <person name="Fraser C.M."/>
        </authorList>
    </citation>
    <scope>NUCLEOTIDE SEQUENCE [LARGE SCALE GENOMIC DNA]</scope>
    <source>
        <strain>104</strain>
    </source>
</reference>
<gene>
    <name evidence="1" type="primary">infB</name>
    <name type="ordered locus">MAV_3693</name>
</gene>
<proteinExistence type="inferred from homology"/>
<evidence type="ECO:0000255" key="1">
    <source>
        <dbReference type="HAMAP-Rule" id="MF_00100"/>
    </source>
</evidence>
<evidence type="ECO:0000256" key="2">
    <source>
        <dbReference type="SAM" id="MobiDB-lite"/>
    </source>
</evidence>
<organism>
    <name type="scientific">Mycobacterium avium (strain 104)</name>
    <dbReference type="NCBI Taxonomy" id="243243"/>
    <lineage>
        <taxon>Bacteria</taxon>
        <taxon>Bacillati</taxon>
        <taxon>Actinomycetota</taxon>
        <taxon>Actinomycetes</taxon>
        <taxon>Mycobacteriales</taxon>
        <taxon>Mycobacteriaceae</taxon>
        <taxon>Mycobacterium</taxon>
        <taxon>Mycobacterium avium complex (MAC)</taxon>
    </lineage>
</organism>
<protein>
    <recommendedName>
        <fullName evidence="1">Translation initiation factor IF-2</fullName>
    </recommendedName>
</protein>
<name>IF2_MYCA1</name>
<comment type="function">
    <text evidence="1">One of the essential components for the initiation of protein synthesis. Protects formylmethionyl-tRNA from spontaneous hydrolysis and promotes its binding to the 30S ribosomal subunits. Also involved in the hydrolysis of GTP during the formation of the 70S ribosomal complex.</text>
</comment>
<comment type="subcellular location">
    <subcellularLocation>
        <location evidence="1">Cytoplasm</location>
    </subcellularLocation>
</comment>
<comment type="similarity">
    <text evidence="1">Belongs to the TRAFAC class translation factor GTPase superfamily. Classic translation factor GTPase family. IF-2 subfamily.</text>
</comment>
<keyword id="KW-0963">Cytoplasm</keyword>
<keyword id="KW-0342">GTP-binding</keyword>
<keyword id="KW-0396">Initiation factor</keyword>
<keyword id="KW-0547">Nucleotide-binding</keyword>
<keyword id="KW-0648">Protein biosynthesis</keyword>
<feature type="chain" id="PRO_1000008278" description="Translation initiation factor IF-2">
    <location>
        <begin position="1"/>
        <end position="914"/>
    </location>
</feature>
<feature type="domain" description="tr-type G">
    <location>
        <begin position="421"/>
        <end position="581"/>
    </location>
</feature>
<feature type="region of interest" description="Disordered" evidence="2">
    <location>
        <begin position="52"/>
        <end position="84"/>
    </location>
</feature>
<feature type="region of interest" description="Disordered" evidence="2">
    <location>
        <begin position="98"/>
        <end position="326"/>
    </location>
</feature>
<feature type="compositionally biased region" description="Low complexity" evidence="2">
    <location>
        <begin position="57"/>
        <end position="68"/>
    </location>
</feature>
<feature type="compositionally biased region" description="Basic and acidic residues" evidence="2">
    <location>
        <begin position="69"/>
        <end position="84"/>
    </location>
</feature>
<feature type="compositionally biased region" description="Low complexity" evidence="2">
    <location>
        <begin position="98"/>
        <end position="138"/>
    </location>
</feature>
<feature type="compositionally biased region" description="Pro residues" evidence="2">
    <location>
        <begin position="139"/>
        <end position="169"/>
    </location>
</feature>
<feature type="compositionally biased region" description="Pro residues" evidence="2">
    <location>
        <begin position="193"/>
        <end position="207"/>
    </location>
</feature>
<feature type="compositionally biased region" description="Gly residues" evidence="2">
    <location>
        <begin position="236"/>
        <end position="296"/>
    </location>
</feature>
<feature type="compositionally biased region" description="Basic residues" evidence="2">
    <location>
        <begin position="300"/>
        <end position="309"/>
    </location>
</feature>
<feature type="binding site" evidence="1">
    <location>
        <begin position="430"/>
        <end position="437"/>
    </location>
    <ligand>
        <name>GTP</name>
        <dbReference type="ChEBI" id="CHEBI:37565"/>
    </ligand>
</feature>
<feature type="binding site" evidence="1">
    <location>
        <begin position="469"/>
        <end position="473"/>
    </location>
    <ligand>
        <name>GTP</name>
        <dbReference type="ChEBI" id="CHEBI:37565"/>
    </ligand>
</feature>
<feature type="binding site" evidence="1">
    <location>
        <begin position="523"/>
        <end position="526"/>
    </location>
    <ligand>
        <name>GTP</name>
        <dbReference type="ChEBI" id="CHEBI:37565"/>
    </ligand>
</feature>
<dbReference type="EMBL" id="CP000479">
    <property type="protein sequence ID" value="ABK66165.1"/>
    <property type="molecule type" value="Genomic_DNA"/>
</dbReference>
<dbReference type="RefSeq" id="WP_011725621.1">
    <property type="nucleotide sequence ID" value="NC_008595.1"/>
</dbReference>
<dbReference type="SMR" id="A0QIY2"/>
<dbReference type="KEGG" id="mav:MAV_3693"/>
<dbReference type="HOGENOM" id="CLU_006301_9_2_11"/>
<dbReference type="Proteomes" id="UP000001574">
    <property type="component" value="Chromosome"/>
</dbReference>
<dbReference type="GO" id="GO:0005829">
    <property type="term" value="C:cytosol"/>
    <property type="evidence" value="ECO:0007669"/>
    <property type="project" value="TreeGrafter"/>
</dbReference>
<dbReference type="GO" id="GO:0005525">
    <property type="term" value="F:GTP binding"/>
    <property type="evidence" value="ECO:0007669"/>
    <property type="project" value="UniProtKB-KW"/>
</dbReference>
<dbReference type="GO" id="GO:0003924">
    <property type="term" value="F:GTPase activity"/>
    <property type="evidence" value="ECO:0007669"/>
    <property type="project" value="UniProtKB-UniRule"/>
</dbReference>
<dbReference type="GO" id="GO:0003743">
    <property type="term" value="F:translation initiation factor activity"/>
    <property type="evidence" value="ECO:0007669"/>
    <property type="project" value="UniProtKB-UniRule"/>
</dbReference>
<dbReference type="CDD" id="cd01887">
    <property type="entry name" value="IF2_eIF5B"/>
    <property type="match status" value="1"/>
</dbReference>
<dbReference type="CDD" id="cd03702">
    <property type="entry name" value="IF2_mtIF2_II"/>
    <property type="match status" value="1"/>
</dbReference>
<dbReference type="CDD" id="cd03692">
    <property type="entry name" value="mtIF2_IVc"/>
    <property type="match status" value="1"/>
</dbReference>
<dbReference type="FunFam" id="1.10.10.2480:FF:000003">
    <property type="entry name" value="Translation initiation factor IF-2"/>
    <property type="match status" value="1"/>
</dbReference>
<dbReference type="FunFam" id="2.40.30.10:FF:000007">
    <property type="entry name" value="Translation initiation factor IF-2"/>
    <property type="match status" value="1"/>
</dbReference>
<dbReference type="FunFam" id="2.40.30.10:FF:000008">
    <property type="entry name" value="Translation initiation factor IF-2"/>
    <property type="match status" value="1"/>
</dbReference>
<dbReference type="FunFam" id="3.40.50.10050:FF:000001">
    <property type="entry name" value="Translation initiation factor IF-2"/>
    <property type="match status" value="1"/>
</dbReference>
<dbReference type="FunFam" id="3.40.50.300:FF:000019">
    <property type="entry name" value="Translation initiation factor IF-2"/>
    <property type="match status" value="1"/>
</dbReference>
<dbReference type="Gene3D" id="1.10.10.2480">
    <property type="match status" value="1"/>
</dbReference>
<dbReference type="Gene3D" id="3.40.50.300">
    <property type="entry name" value="P-loop containing nucleotide triphosphate hydrolases"/>
    <property type="match status" value="1"/>
</dbReference>
<dbReference type="Gene3D" id="2.40.30.10">
    <property type="entry name" value="Translation factors"/>
    <property type="match status" value="2"/>
</dbReference>
<dbReference type="Gene3D" id="3.40.50.10050">
    <property type="entry name" value="Translation initiation factor IF- 2, domain 3"/>
    <property type="match status" value="1"/>
</dbReference>
<dbReference type="HAMAP" id="MF_00100_B">
    <property type="entry name" value="IF_2_B"/>
    <property type="match status" value="1"/>
</dbReference>
<dbReference type="InterPro" id="IPR053905">
    <property type="entry name" value="EF-G-like_DII"/>
</dbReference>
<dbReference type="InterPro" id="IPR044145">
    <property type="entry name" value="IF2_II"/>
</dbReference>
<dbReference type="InterPro" id="IPR006847">
    <property type="entry name" value="IF2_N"/>
</dbReference>
<dbReference type="InterPro" id="IPR027417">
    <property type="entry name" value="P-loop_NTPase"/>
</dbReference>
<dbReference type="InterPro" id="IPR005225">
    <property type="entry name" value="Small_GTP-bd"/>
</dbReference>
<dbReference type="InterPro" id="IPR000795">
    <property type="entry name" value="T_Tr_GTP-bd_dom"/>
</dbReference>
<dbReference type="InterPro" id="IPR000178">
    <property type="entry name" value="TF_IF2_bacterial-like"/>
</dbReference>
<dbReference type="InterPro" id="IPR015760">
    <property type="entry name" value="TIF_IF2"/>
</dbReference>
<dbReference type="InterPro" id="IPR023115">
    <property type="entry name" value="TIF_IF2_dom3"/>
</dbReference>
<dbReference type="InterPro" id="IPR036925">
    <property type="entry name" value="TIF_IF2_dom3_sf"/>
</dbReference>
<dbReference type="InterPro" id="IPR009000">
    <property type="entry name" value="Transl_B-barrel_sf"/>
</dbReference>
<dbReference type="NCBIfam" id="TIGR00487">
    <property type="entry name" value="IF-2"/>
    <property type="match status" value="1"/>
</dbReference>
<dbReference type="NCBIfam" id="TIGR00231">
    <property type="entry name" value="small_GTP"/>
    <property type="match status" value="1"/>
</dbReference>
<dbReference type="PANTHER" id="PTHR43381:SF5">
    <property type="entry name" value="TR-TYPE G DOMAIN-CONTAINING PROTEIN"/>
    <property type="match status" value="1"/>
</dbReference>
<dbReference type="PANTHER" id="PTHR43381">
    <property type="entry name" value="TRANSLATION INITIATION FACTOR IF-2-RELATED"/>
    <property type="match status" value="1"/>
</dbReference>
<dbReference type="Pfam" id="PF22042">
    <property type="entry name" value="EF-G_D2"/>
    <property type="match status" value="1"/>
</dbReference>
<dbReference type="Pfam" id="PF00009">
    <property type="entry name" value="GTP_EFTU"/>
    <property type="match status" value="1"/>
</dbReference>
<dbReference type="Pfam" id="PF11987">
    <property type="entry name" value="IF-2"/>
    <property type="match status" value="1"/>
</dbReference>
<dbReference type="Pfam" id="PF04760">
    <property type="entry name" value="IF2_N"/>
    <property type="match status" value="2"/>
</dbReference>
<dbReference type="PRINTS" id="PR00449">
    <property type="entry name" value="RASTRNSFRMNG"/>
</dbReference>
<dbReference type="SUPFAM" id="SSF52156">
    <property type="entry name" value="Initiation factor IF2/eIF5b, domain 3"/>
    <property type="match status" value="1"/>
</dbReference>
<dbReference type="SUPFAM" id="SSF52540">
    <property type="entry name" value="P-loop containing nucleoside triphosphate hydrolases"/>
    <property type="match status" value="1"/>
</dbReference>
<dbReference type="SUPFAM" id="SSF50447">
    <property type="entry name" value="Translation proteins"/>
    <property type="match status" value="2"/>
</dbReference>
<dbReference type="PROSITE" id="PS51722">
    <property type="entry name" value="G_TR_2"/>
    <property type="match status" value="1"/>
</dbReference>
<dbReference type="PROSITE" id="PS01176">
    <property type="entry name" value="IF2"/>
    <property type="match status" value="1"/>
</dbReference>